<keyword id="KW-0030">Aminoacyl-tRNA synthetase</keyword>
<keyword id="KW-0067">ATP-binding</keyword>
<keyword id="KW-0963">Cytoplasm</keyword>
<keyword id="KW-0436">Ligase</keyword>
<keyword id="KW-0547">Nucleotide-binding</keyword>
<keyword id="KW-0648">Protein biosynthesis</keyword>
<gene>
    <name evidence="1" type="primary">proS</name>
    <name type="ordered locus">HDEF_0391</name>
</gene>
<feature type="chain" id="PRO_1000215531" description="Proline--tRNA ligase">
    <location>
        <begin position="1"/>
        <end position="579"/>
    </location>
</feature>
<reference key="1">
    <citation type="journal article" date="2009" name="Proc. Natl. Acad. Sci. U.S.A.">
        <title>Hamiltonella defensa, genome evolution of protective bacterial endosymbiont from pathogenic ancestors.</title>
        <authorList>
            <person name="Degnan P.H."/>
            <person name="Yu Y."/>
            <person name="Sisneros N."/>
            <person name="Wing R.A."/>
            <person name="Moran N.A."/>
        </authorList>
    </citation>
    <scope>NUCLEOTIDE SEQUENCE [LARGE SCALE GENOMIC DNA]</scope>
    <source>
        <strain>5AT</strain>
    </source>
</reference>
<proteinExistence type="inferred from homology"/>
<sequence>MRTTQYLLSTLKELPADAEIISHQLMLRAGMIRKLASGLYTWLPTGTRVLKKIENIVREEMNKAGAIEVVMPIVQPADLWQESERWEHYGPELLRFADRSERPFVLGPTHEEVITDLVRNEISSYKQLPLNFFQIQTKFRDEIRPRFGIMRAREFLMKDAYSFHNTLESLQETYQTMYQAYTKIFERMQLNFRAVQADTGSIGGSRSHEFQVLADSGEDEIVFSTVSDFAANIELAEALVPHEKRASPCETLRIIDTPNAKTIDQLVEQFSIPIEKTLKTLIVYAHKDSGHKLLALLVRGDHLINKVKAEKSPQVAKPLTFASEEDIRAHIGAGPGSLGPLHLKMPIIADRAVAVMSDFSAGSNKEDQHYFGINWERDLPLPIIEDLRNVVEGDPSPDGKGTLLIKRGIEVGHIFQLGTKYSQAMGAKVQGENGRQQMMIMGCYGIGVSRLVAAAIEQHHDQHGILWPEAIAPFQVAILPIHLKKSDAVRQEAERLYAELSSLGMDVIFDDRQERPGVMFADMELIGIPHTLIIGDRDLENNELEYRYRGIDDHKKQQLKISDVVSFLLEKINSHFNPK</sequence>
<comment type="function">
    <text evidence="1">Catalyzes the attachment of proline to tRNA(Pro) in a two-step reaction: proline is first activated by ATP to form Pro-AMP and then transferred to the acceptor end of tRNA(Pro). As ProRS can inadvertently accommodate and process non-cognate amino acids such as alanine and cysteine, to avoid such errors it has two additional distinct editing activities against alanine. One activity is designated as 'pretransfer' editing and involves the tRNA(Pro)-independent hydrolysis of activated Ala-AMP. The other activity is designated 'posttransfer' editing and involves deacylation of mischarged Ala-tRNA(Pro). The misacylated Cys-tRNA(Pro) is not edited by ProRS.</text>
</comment>
<comment type="catalytic activity">
    <reaction evidence="1">
        <text>tRNA(Pro) + L-proline + ATP = L-prolyl-tRNA(Pro) + AMP + diphosphate</text>
        <dbReference type="Rhea" id="RHEA:14305"/>
        <dbReference type="Rhea" id="RHEA-COMP:9700"/>
        <dbReference type="Rhea" id="RHEA-COMP:9702"/>
        <dbReference type="ChEBI" id="CHEBI:30616"/>
        <dbReference type="ChEBI" id="CHEBI:33019"/>
        <dbReference type="ChEBI" id="CHEBI:60039"/>
        <dbReference type="ChEBI" id="CHEBI:78442"/>
        <dbReference type="ChEBI" id="CHEBI:78532"/>
        <dbReference type="ChEBI" id="CHEBI:456215"/>
        <dbReference type="EC" id="6.1.1.15"/>
    </reaction>
</comment>
<comment type="subunit">
    <text evidence="1">Homodimer.</text>
</comment>
<comment type="subcellular location">
    <subcellularLocation>
        <location evidence="1">Cytoplasm</location>
    </subcellularLocation>
</comment>
<comment type="domain">
    <text evidence="1">Consists of three domains: the N-terminal catalytic domain, the editing domain and the C-terminal anticodon-binding domain.</text>
</comment>
<comment type="similarity">
    <text evidence="1">Belongs to the class-II aminoacyl-tRNA synthetase family. ProS type 1 subfamily.</text>
</comment>
<dbReference type="EC" id="6.1.1.15" evidence="1"/>
<dbReference type="EMBL" id="CP001277">
    <property type="protein sequence ID" value="ACQ67147.1"/>
    <property type="molecule type" value="Genomic_DNA"/>
</dbReference>
<dbReference type="RefSeq" id="WP_012738107.1">
    <property type="nucleotide sequence ID" value="NC_012751.1"/>
</dbReference>
<dbReference type="SMR" id="C4K3K4"/>
<dbReference type="STRING" id="572265.HDEF_0391"/>
<dbReference type="GeneID" id="66260295"/>
<dbReference type="KEGG" id="hde:HDEF_0391"/>
<dbReference type="eggNOG" id="COG0442">
    <property type="taxonomic scope" value="Bacteria"/>
</dbReference>
<dbReference type="HOGENOM" id="CLU_016739_0_0_6"/>
<dbReference type="Proteomes" id="UP000002334">
    <property type="component" value="Chromosome"/>
</dbReference>
<dbReference type="GO" id="GO:0005829">
    <property type="term" value="C:cytosol"/>
    <property type="evidence" value="ECO:0007669"/>
    <property type="project" value="TreeGrafter"/>
</dbReference>
<dbReference type="GO" id="GO:0002161">
    <property type="term" value="F:aminoacyl-tRNA deacylase activity"/>
    <property type="evidence" value="ECO:0007669"/>
    <property type="project" value="InterPro"/>
</dbReference>
<dbReference type="GO" id="GO:0005524">
    <property type="term" value="F:ATP binding"/>
    <property type="evidence" value="ECO:0007669"/>
    <property type="project" value="UniProtKB-UniRule"/>
</dbReference>
<dbReference type="GO" id="GO:0004827">
    <property type="term" value="F:proline-tRNA ligase activity"/>
    <property type="evidence" value="ECO:0007669"/>
    <property type="project" value="UniProtKB-UniRule"/>
</dbReference>
<dbReference type="GO" id="GO:0006433">
    <property type="term" value="P:prolyl-tRNA aminoacylation"/>
    <property type="evidence" value="ECO:0007669"/>
    <property type="project" value="UniProtKB-UniRule"/>
</dbReference>
<dbReference type="CDD" id="cd04334">
    <property type="entry name" value="ProRS-INS"/>
    <property type="match status" value="1"/>
</dbReference>
<dbReference type="CDD" id="cd00861">
    <property type="entry name" value="ProRS_anticodon_short"/>
    <property type="match status" value="1"/>
</dbReference>
<dbReference type="CDD" id="cd00779">
    <property type="entry name" value="ProRS_core_prok"/>
    <property type="match status" value="1"/>
</dbReference>
<dbReference type="FunFam" id="3.30.930.10:FF:000043">
    <property type="entry name" value="Proline--tRNA ligase"/>
    <property type="match status" value="1"/>
</dbReference>
<dbReference type="FunFam" id="3.30.930.10:FF:000097">
    <property type="entry name" value="Proline--tRNA ligase"/>
    <property type="match status" value="1"/>
</dbReference>
<dbReference type="Gene3D" id="3.40.50.800">
    <property type="entry name" value="Anticodon-binding domain"/>
    <property type="match status" value="1"/>
</dbReference>
<dbReference type="Gene3D" id="3.30.930.10">
    <property type="entry name" value="Bira Bifunctional Protein, Domain 2"/>
    <property type="match status" value="2"/>
</dbReference>
<dbReference type="HAMAP" id="MF_01569">
    <property type="entry name" value="Pro_tRNA_synth_type1"/>
    <property type="match status" value="1"/>
</dbReference>
<dbReference type="InterPro" id="IPR002314">
    <property type="entry name" value="aa-tRNA-synt_IIb"/>
</dbReference>
<dbReference type="InterPro" id="IPR006195">
    <property type="entry name" value="aa-tRNA-synth_II"/>
</dbReference>
<dbReference type="InterPro" id="IPR045864">
    <property type="entry name" value="aa-tRNA-synth_II/BPL/LPL"/>
</dbReference>
<dbReference type="InterPro" id="IPR004154">
    <property type="entry name" value="Anticodon-bd"/>
</dbReference>
<dbReference type="InterPro" id="IPR036621">
    <property type="entry name" value="Anticodon-bd_dom_sf"/>
</dbReference>
<dbReference type="InterPro" id="IPR002316">
    <property type="entry name" value="Pro-tRNA-ligase_IIa"/>
</dbReference>
<dbReference type="InterPro" id="IPR004500">
    <property type="entry name" value="Pro-tRNA-synth_IIa_bac-type"/>
</dbReference>
<dbReference type="InterPro" id="IPR023717">
    <property type="entry name" value="Pro-tRNA-Synthase_IIa_type1"/>
</dbReference>
<dbReference type="InterPro" id="IPR050062">
    <property type="entry name" value="Pro-tRNA_synthetase"/>
</dbReference>
<dbReference type="InterPro" id="IPR044140">
    <property type="entry name" value="ProRS_anticodon_short"/>
</dbReference>
<dbReference type="InterPro" id="IPR033730">
    <property type="entry name" value="ProRS_core_prok"/>
</dbReference>
<dbReference type="InterPro" id="IPR036754">
    <property type="entry name" value="YbaK/aa-tRNA-synt-asso_dom_sf"/>
</dbReference>
<dbReference type="InterPro" id="IPR007214">
    <property type="entry name" value="YbaK/aa-tRNA-synth-assoc-dom"/>
</dbReference>
<dbReference type="NCBIfam" id="NF006625">
    <property type="entry name" value="PRK09194.1"/>
    <property type="match status" value="1"/>
</dbReference>
<dbReference type="NCBIfam" id="TIGR00409">
    <property type="entry name" value="proS_fam_II"/>
    <property type="match status" value="1"/>
</dbReference>
<dbReference type="PANTHER" id="PTHR42753">
    <property type="entry name" value="MITOCHONDRIAL RIBOSOME PROTEIN L39/PROLYL-TRNA LIGASE FAMILY MEMBER"/>
    <property type="match status" value="1"/>
</dbReference>
<dbReference type="PANTHER" id="PTHR42753:SF2">
    <property type="entry name" value="PROLINE--TRNA LIGASE"/>
    <property type="match status" value="1"/>
</dbReference>
<dbReference type="Pfam" id="PF03129">
    <property type="entry name" value="HGTP_anticodon"/>
    <property type="match status" value="1"/>
</dbReference>
<dbReference type="Pfam" id="PF00587">
    <property type="entry name" value="tRNA-synt_2b"/>
    <property type="match status" value="1"/>
</dbReference>
<dbReference type="Pfam" id="PF04073">
    <property type="entry name" value="tRNA_edit"/>
    <property type="match status" value="1"/>
</dbReference>
<dbReference type="PIRSF" id="PIRSF001535">
    <property type="entry name" value="ProRS_1"/>
    <property type="match status" value="1"/>
</dbReference>
<dbReference type="PRINTS" id="PR01046">
    <property type="entry name" value="TRNASYNTHPRO"/>
</dbReference>
<dbReference type="SUPFAM" id="SSF52954">
    <property type="entry name" value="Class II aaRS ABD-related"/>
    <property type="match status" value="1"/>
</dbReference>
<dbReference type="SUPFAM" id="SSF55681">
    <property type="entry name" value="Class II aaRS and biotin synthetases"/>
    <property type="match status" value="1"/>
</dbReference>
<dbReference type="SUPFAM" id="SSF55826">
    <property type="entry name" value="YbaK/ProRS associated domain"/>
    <property type="match status" value="1"/>
</dbReference>
<dbReference type="PROSITE" id="PS50862">
    <property type="entry name" value="AA_TRNA_LIGASE_II"/>
    <property type="match status" value="1"/>
</dbReference>
<name>SYP_HAMD5</name>
<organism>
    <name type="scientific">Hamiltonella defensa subsp. Acyrthosiphon pisum (strain 5AT)</name>
    <dbReference type="NCBI Taxonomy" id="572265"/>
    <lineage>
        <taxon>Bacteria</taxon>
        <taxon>Pseudomonadati</taxon>
        <taxon>Pseudomonadota</taxon>
        <taxon>Gammaproteobacteria</taxon>
        <taxon>Enterobacterales</taxon>
        <taxon>Enterobacteriaceae</taxon>
        <taxon>aphid secondary symbionts</taxon>
        <taxon>Candidatus Hamiltonella</taxon>
    </lineage>
</organism>
<evidence type="ECO:0000255" key="1">
    <source>
        <dbReference type="HAMAP-Rule" id="MF_01569"/>
    </source>
</evidence>
<accession>C4K3K4</accession>
<protein>
    <recommendedName>
        <fullName evidence="1">Proline--tRNA ligase</fullName>
        <ecNumber evidence="1">6.1.1.15</ecNumber>
    </recommendedName>
    <alternativeName>
        <fullName evidence="1">Prolyl-tRNA synthetase</fullName>
        <shortName evidence="1">ProRS</shortName>
    </alternativeName>
</protein>